<sequence length="624" mass="70794">MEIPGSLCKKVKLSNNAQNWGMQRATNVTYQAHHVSRNKRGQVVGTRGGFRGCTVWLTGLSGAGKTTVSMALEEYLVCHGIPCYTLDGDNIRQGLNKNLGFSPEDREENVRRIAEVAKLFADAGLVCITSFISPYTQDRNNARQIHEGASLPFFEVFVDAPLHVCEQRDVKGLYKKARAGEIKGFTGIDSEYEKPEAPELVLKTDSCDVNDCVQQVVELLQERDIVPVDASYEVKELYVPENKLHLAKTDAEALPALKINKVDMQWVQVLAEGWATPLNGFMREREYLQCLHFDCLLDGGVINLSVPIVLTATHEDKERLDGCTAFALVYEGRRVAILRNPEFFEHRKEERCARQWGTTCKNHPYIKMVLEQGDWLIGGDLQVLDRIYWNDGLDQYRLTPTELKQKFKDMNADAVFAFQLRNPVHNGHALLMQDTHKQLLERGYRRPVLLLHPLGGWTKDDDVPLMWRMKQHAAVLEEGILDPETTVVAIFPSPMMYAGPTEVQWHCRARMVAGANFYIVGRDPAGMPHPETGKDLYEPTHGAKVLTMAPGLITLEIVPFRVAAYNKKKKRMDYYDSEHHEDFEFISGTRMRKLAREGQKPPEGFMAPKAWTVLVEYYKSLEKA</sequence>
<comment type="function">
    <text evidence="1 2">Bifunctional enzyme with both ATP sulfurylase and APS kinase activity, which mediates two steps in the sulfate activation pathway. The first step is the transfer of a sulfate group to ATP to yield adenosine 5'-phosphosulfate (APS), and the second step is the transfer of a phosphate group from ATP to APS yielding 3'-phosphoadenylylsulfate (PAPS: activated sulfate donor used by sulfotransferase). In mammals, PAPS is the sole source of sulfate; APS appears to be only an intermediate in the sulfate-activation pathway (PubMed:7493984). Required for normal biosynthesis of sulfated L-selectin ligands in endothelial cells (By similarity).</text>
</comment>
<comment type="catalytic activity">
    <reaction evidence="2">
        <text>sulfate + ATP + H(+) = adenosine 5'-phosphosulfate + diphosphate</text>
        <dbReference type="Rhea" id="RHEA:18133"/>
        <dbReference type="ChEBI" id="CHEBI:15378"/>
        <dbReference type="ChEBI" id="CHEBI:16189"/>
        <dbReference type="ChEBI" id="CHEBI:30616"/>
        <dbReference type="ChEBI" id="CHEBI:33019"/>
        <dbReference type="ChEBI" id="CHEBI:58243"/>
        <dbReference type="EC" id="2.7.7.4"/>
    </reaction>
</comment>
<comment type="catalytic activity">
    <reaction evidence="2">
        <text>adenosine 5'-phosphosulfate + ATP = 3'-phosphoadenylyl sulfate + ADP + H(+)</text>
        <dbReference type="Rhea" id="RHEA:24152"/>
        <dbReference type="ChEBI" id="CHEBI:15378"/>
        <dbReference type="ChEBI" id="CHEBI:30616"/>
        <dbReference type="ChEBI" id="CHEBI:58243"/>
        <dbReference type="ChEBI" id="CHEBI:58339"/>
        <dbReference type="ChEBI" id="CHEBI:456216"/>
        <dbReference type="EC" id="2.7.1.25"/>
    </reaction>
</comment>
<comment type="pathway">
    <text evidence="2">Sulfur metabolism; sulfate assimilation.</text>
</comment>
<comment type="subunit">
    <text evidence="1">Homodimer.</text>
</comment>
<comment type="tissue specificity">
    <text evidence="2">Expressed in the neonatal brain and in cartilage.</text>
</comment>
<comment type="similarity">
    <text evidence="3">In the N-terminal section; belongs to the APS kinase family.</text>
</comment>
<comment type="similarity">
    <text evidence="3">In the C-terminal section; belongs to the sulfate adenylyltransferase family.</text>
</comment>
<dbReference type="EC" id="2.7.7.4" evidence="2"/>
<dbReference type="EC" id="2.7.1.25" evidence="2"/>
<dbReference type="EMBL" id="U34883">
    <property type="protein sequence ID" value="AAC52328.1"/>
    <property type="molecule type" value="mRNA"/>
</dbReference>
<dbReference type="EMBL" id="AK146507">
    <property type="protein sequence ID" value="BAE27221.1"/>
    <property type="molecule type" value="mRNA"/>
</dbReference>
<dbReference type="EMBL" id="AK153296">
    <property type="protein sequence ID" value="BAE31878.1"/>
    <property type="molecule type" value="mRNA"/>
</dbReference>
<dbReference type="EMBL" id="AK168982">
    <property type="protein sequence ID" value="BAE40782.1"/>
    <property type="molecule type" value="mRNA"/>
</dbReference>
<dbReference type="EMBL" id="AK169124">
    <property type="protein sequence ID" value="BAE40904.1"/>
    <property type="molecule type" value="mRNA"/>
</dbReference>
<dbReference type="EMBL" id="CH466532">
    <property type="protein sequence ID" value="EDL12198.1"/>
    <property type="molecule type" value="Genomic_DNA"/>
</dbReference>
<dbReference type="CCDS" id="CCDS38641.1"/>
<dbReference type="RefSeq" id="NP_035993.1">
    <property type="nucleotide sequence ID" value="NM_011863.3"/>
</dbReference>
<dbReference type="SMR" id="Q60967"/>
<dbReference type="BioGRID" id="204832">
    <property type="interactions" value="27"/>
</dbReference>
<dbReference type="FunCoup" id="Q60967">
    <property type="interactions" value="1569"/>
</dbReference>
<dbReference type="IntAct" id="Q60967">
    <property type="interactions" value="28"/>
</dbReference>
<dbReference type="STRING" id="10090.ENSMUSP00000029666"/>
<dbReference type="GlyGen" id="Q60967">
    <property type="glycosylation" value="1 site, 1 O-linked glycan (1 site)"/>
</dbReference>
<dbReference type="iPTMnet" id="Q60967"/>
<dbReference type="PhosphoSitePlus" id="Q60967"/>
<dbReference type="jPOST" id="Q60967"/>
<dbReference type="PaxDb" id="10090-ENSMUSP00000029666"/>
<dbReference type="ProteomicsDB" id="288058"/>
<dbReference type="Pumba" id="Q60967"/>
<dbReference type="Antibodypedia" id="26233">
    <property type="antibodies" value="167 antibodies from 28 providers"/>
</dbReference>
<dbReference type="DNASU" id="23971"/>
<dbReference type="Ensembl" id="ENSMUST00000029666.14">
    <property type="protein sequence ID" value="ENSMUSP00000029666.10"/>
    <property type="gene ID" value="ENSMUSG00000028032.14"/>
</dbReference>
<dbReference type="GeneID" id="23971"/>
<dbReference type="KEGG" id="mmu:23971"/>
<dbReference type="UCSC" id="uc008rjr.2">
    <property type="organism name" value="mouse"/>
</dbReference>
<dbReference type="AGR" id="MGI:1330587"/>
<dbReference type="CTD" id="9061"/>
<dbReference type="MGI" id="MGI:1330587">
    <property type="gene designation" value="Papss1"/>
</dbReference>
<dbReference type="VEuPathDB" id="HostDB:ENSMUSG00000028032"/>
<dbReference type="eggNOG" id="KOG4238">
    <property type="taxonomic scope" value="Eukaryota"/>
</dbReference>
<dbReference type="GeneTree" id="ENSGT00390000009613"/>
<dbReference type="InParanoid" id="Q60967"/>
<dbReference type="OMA" id="LPASQCK"/>
<dbReference type="OrthoDB" id="506431at2759"/>
<dbReference type="PhylomeDB" id="Q60967"/>
<dbReference type="TreeFam" id="TF313143"/>
<dbReference type="Reactome" id="R-MMU-174362">
    <property type="pathway name" value="Transport and synthesis of PAPS"/>
</dbReference>
<dbReference type="UniPathway" id="UPA00097"/>
<dbReference type="BioGRID-ORCS" id="23971">
    <property type="hits" value="6 hits in 81 CRISPR screens"/>
</dbReference>
<dbReference type="ChiTaRS" id="Papss1">
    <property type="organism name" value="mouse"/>
</dbReference>
<dbReference type="PRO" id="PR:Q60967"/>
<dbReference type="Proteomes" id="UP000000589">
    <property type="component" value="Chromosome 3"/>
</dbReference>
<dbReference type="RNAct" id="Q60967">
    <property type="molecule type" value="protein"/>
</dbReference>
<dbReference type="Bgee" id="ENSMUSG00000028032">
    <property type="expression patterns" value="Expressed in vestibular membrane of cochlear duct and 265 other cell types or tissues"/>
</dbReference>
<dbReference type="ExpressionAtlas" id="Q60967">
    <property type="expression patterns" value="baseline and differential"/>
</dbReference>
<dbReference type="GO" id="GO:0005829">
    <property type="term" value="C:cytosol"/>
    <property type="evidence" value="ECO:0000266"/>
    <property type="project" value="MGI"/>
</dbReference>
<dbReference type="GO" id="GO:0005634">
    <property type="term" value="C:nucleus"/>
    <property type="evidence" value="ECO:0007669"/>
    <property type="project" value="Ensembl"/>
</dbReference>
<dbReference type="GO" id="GO:0009336">
    <property type="term" value="C:sulfate adenylyltransferase complex (ATP)"/>
    <property type="evidence" value="ECO:0000305"/>
    <property type="project" value="MGI"/>
</dbReference>
<dbReference type="GO" id="GO:0004020">
    <property type="term" value="F:adenylylsulfate kinase activity"/>
    <property type="evidence" value="ECO:0000314"/>
    <property type="project" value="MGI"/>
</dbReference>
<dbReference type="GO" id="GO:0005524">
    <property type="term" value="F:ATP binding"/>
    <property type="evidence" value="ECO:0007669"/>
    <property type="project" value="UniProtKB-KW"/>
</dbReference>
<dbReference type="GO" id="GO:0016779">
    <property type="term" value="F:nucleotidyltransferase activity"/>
    <property type="evidence" value="ECO:0000250"/>
    <property type="project" value="UniProtKB"/>
</dbReference>
<dbReference type="GO" id="GO:0042803">
    <property type="term" value="F:protein homodimerization activity"/>
    <property type="evidence" value="ECO:0007669"/>
    <property type="project" value="Ensembl"/>
</dbReference>
<dbReference type="GO" id="GO:0004781">
    <property type="term" value="F:sulfate adenylyltransferase (ATP) activity"/>
    <property type="evidence" value="ECO:0000314"/>
    <property type="project" value="MGI"/>
</dbReference>
<dbReference type="GO" id="GO:0050428">
    <property type="term" value="P:3'-phosphoadenosine 5'-phosphosulfate biosynthetic process"/>
    <property type="evidence" value="ECO:0000314"/>
    <property type="project" value="MGI"/>
</dbReference>
<dbReference type="GO" id="GO:0000103">
    <property type="term" value="P:sulfate assimilation"/>
    <property type="evidence" value="ECO:0000250"/>
    <property type="project" value="UniProtKB"/>
</dbReference>
<dbReference type="CDD" id="cd02027">
    <property type="entry name" value="APSK"/>
    <property type="match status" value="1"/>
</dbReference>
<dbReference type="CDD" id="cd00517">
    <property type="entry name" value="ATPS"/>
    <property type="match status" value="1"/>
</dbReference>
<dbReference type="FunFam" id="3.40.50.300:FF:000243">
    <property type="entry name" value="Bifunctional 3'-phosphoadenosine 5'-phosphosulfate synthase 1"/>
    <property type="match status" value="1"/>
</dbReference>
<dbReference type="FunFam" id="3.10.400.10:FF:000001">
    <property type="entry name" value="bifunctional 3'-phosphoadenosine 5'-phosphosulfate synthase 1"/>
    <property type="match status" value="1"/>
</dbReference>
<dbReference type="FunFam" id="3.40.50.620:FF:000006">
    <property type="entry name" value="bifunctional 3'-phosphoadenosine 5'-phosphosulfate synthase 1"/>
    <property type="match status" value="1"/>
</dbReference>
<dbReference type="Gene3D" id="3.40.50.620">
    <property type="entry name" value="HUPs"/>
    <property type="match status" value="1"/>
</dbReference>
<dbReference type="Gene3D" id="3.40.50.300">
    <property type="entry name" value="P-loop containing nucleotide triphosphate hydrolases"/>
    <property type="match status" value="1"/>
</dbReference>
<dbReference type="Gene3D" id="3.10.400.10">
    <property type="entry name" value="Sulfate adenylyltransferase"/>
    <property type="match status" value="1"/>
</dbReference>
<dbReference type="HAMAP" id="MF_00065">
    <property type="entry name" value="Adenylyl_sulf_kinase"/>
    <property type="match status" value="1"/>
</dbReference>
<dbReference type="InterPro" id="IPR002891">
    <property type="entry name" value="APS_kinase"/>
</dbReference>
<dbReference type="InterPro" id="IPR025980">
    <property type="entry name" value="ATP-Sase_PUA-like_dom"/>
</dbReference>
<dbReference type="InterPro" id="IPR027417">
    <property type="entry name" value="P-loop_NTPase"/>
</dbReference>
<dbReference type="InterPro" id="IPR015947">
    <property type="entry name" value="PUA-like_sf"/>
</dbReference>
<dbReference type="InterPro" id="IPR014729">
    <property type="entry name" value="Rossmann-like_a/b/a_fold"/>
</dbReference>
<dbReference type="InterPro" id="IPR024951">
    <property type="entry name" value="Sulfurylase_cat_dom"/>
</dbReference>
<dbReference type="InterPro" id="IPR002650">
    <property type="entry name" value="Sulphate_adenylyltransferase"/>
</dbReference>
<dbReference type="NCBIfam" id="TIGR00455">
    <property type="entry name" value="apsK"/>
    <property type="match status" value="1"/>
</dbReference>
<dbReference type="NCBIfam" id="NF003013">
    <property type="entry name" value="PRK03846.1"/>
    <property type="match status" value="1"/>
</dbReference>
<dbReference type="NCBIfam" id="TIGR00339">
    <property type="entry name" value="sopT"/>
    <property type="match status" value="1"/>
</dbReference>
<dbReference type="PANTHER" id="PTHR11055">
    <property type="entry name" value="BIFUNCTIONAL 3'-PHOSPHOADENOSINE 5'-PHOSPHOSULFATE SYNTHASE"/>
    <property type="match status" value="1"/>
</dbReference>
<dbReference type="PANTHER" id="PTHR11055:SF17">
    <property type="entry name" value="BIFUNCTIONAL 3'-PHOSPHOADENOSINE 5'-PHOSPHOSULFATE SYNTHASE 1"/>
    <property type="match status" value="1"/>
</dbReference>
<dbReference type="Pfam" id="PF01583">
    <property type="entry name" value="APS_kinase"/>
    <property type="match status" value="1"/>
</dbReference>
<dbReference type="Pfam" id="PF01747">
    <property type="entry name" value="ATP-sulfurylase"/>
    <property type="match status" value="1"/>
</dbReference>
<dbReference type="Pfam" id="PF14306">
    <property type="entry name" value="PUA_2"/>
    <property type="match status" value="1"/>
</dbReference>
<dbReference type="SUPFAM" id="SSF52374">
    <property type="entry name" value="Nucleotidylyl transferase"/>
    <property type="match status" value="1"/>
</dbReference>
<dbReference type="SUPFAM" id="SSF52540">
    <property type="entry name" value="P-loop containing nucleoside triphosphate hydrolases"/>
    <property type="match status" value="1"/>
</dbReference>
<dbReference type="SUPFAM" id="SSF88697">
    <property type="entry name" value="PUA domain-like"/>
    <property type="match status" value="1"/>
</dbReference>
<name>PAPS1_MOUSE</name>
<proteinExistence type="evidence at protein level"/>
<evidence type="ECO:0000250" key="1">
    <source>
        <dbReference type="UniProtKB" id="O43252"/>
    </source>
</evidence>
<evidence type="ECO:0000269" key="2">
    <source>
    </source>
</evidence>
<evidence type="ECO:0000305" key="3"/>
<evidence type="ECO:0000312" key="4">
    <source>
        <dbReference type="EMBL" id="BAE27221.1"/>
    </source>
</evidence>
<evidence type="ECO:0000312" key="5">
    <source>
        <dbReference type="EMBL" id="BAE31878.1"/>
    </source>
</evidence>
<evidence type="ECO:0000312" key="6">
    <source>
        <dbReference type="EMBL" id="BAE40904.1"/>
    </source>
</evidence>
<evidence type="ECO:0007744" key="7">
    <source>
    </source>
</evidence>
<gene>
    <name type="primary">Papss1</name>
    <name type="synonym">Asapk</name>
    <name type="synonym">Atpsk1</name>
    <name type="synonym">Papss</name>
</gene>
<feature type="chain" id="PRO_0000105960" description="Bifunctional 3'-phosphoadenosine 5'-phosphosulfate synthase 1">
    <location>
        <begin position="1"/>
        <end position="624"/>
    </location>
</feature>
<feature type="region of interest" description="Adenylyl-sulfate kinase" evidence="1">
    <location>
        <begin position="1"/>
        <end position="225"/>
    </location>
</feature>
<feature type="region of interest" description="Sulfate adenylyltransferase" evidence="1">
    <location>
        <begin position="234"/>
        <end position="624"/>
    </location>
</feature>
<feature type="binding site" evidence="1">
    <location>
        <begin position="62"/>
        <end position="67"/>
    </location>
    <ligand>
        <name>ATP</name>
        <dbReference type="ChEBI" id="CHEBI:30616"/>
        <label>1</label>
    </ligand>
</feature>
<feature type="binding site" evidence="1">
    <location>
        <begin position="89"/>
        <end position="92"/>
    </location>
    <ligand>
        <name>adenosine 5'-phosphosulfate</name>
        <dbReference type="ChEBI" id="CHEBI:58243"/>
    </ligand>
</feature>
<feature type="binding site" evidence="1">
    <location>
        <position position="101"/>
    </location>
    <ligand>
        <name>adenosine 5'-phosphosulfate</name>
        <dbReference type="ChEBI" id="CHEBI:58243"/>
    </ligand>
</feature>
<feature type="binding site" evidence="1">
    <location>
        <begin position="106"/>
        <end position="109"/>
    </location>
    <ligand>
        <name>adenosine 5'-phosphosulfate</name>
        <dbReference type="ChEBI" id="CHEBI:58243"/>
    </ligand>
</feature>
<feature type="binding site" evidence="1">
    <location>
        <begin position="132"/>
        <end position="133"/>
    </location>
    <ligand>
        <name>adenosine 5'-phosphosulfate</name>
        <dbReference type="ChEBI" id="CHEBI:58243"/>
    </ligand>
</feature>
<feature type="binding site" evidence="1">
    <location>
        <position position="171"/>
    </location>
    <ligand>
        <name>adenosine 5'-phosphosulfate</name>
        <dbReference type="ChEBI" id="CHEBI:58243"/>
    </ligand>
</feature>
<feature type="binding site" evidence="1">
    <location>
        <begin position="184"/>
        <end position="185"/>
    </location>
    <ligand>
        <name>adenosine 5'-phosphosulfate</name>
        <dbReference type="ChEBI" id="CHEBI:58243"/>
    </ligand>
</feature>
<feature type="binding site" evidence="1">
    <location>
        <position position="207"/>
    </location>
    <ligand>
        <name>ATP</name>
        <dbReference type="ChEBI" id="CHEBI:30616"/>
        <label>1</label>
    </ligand>
</feature>
<feature type="binding site" evidence="1">
    <location>
        <position position="212"/>
    </location>
    <ligand>
        <name>ATP</name>
        <dbReference type="ChEBI" id="CHEBI:30616"/>
        <label>1</label>
    </ligand>
</feature>
<feature type="binding site" evidence="1">
    <location>
        <begin position="419"/>
        <end position="422"/>
    </location>
    <ligand>
        <name>ATP</name>
        <dbReference type="ChEBI" id="CHEBI:30616"/>
        <label>2</label>
    </ligand>
</feature>
<feature type="binding site" evidence="1">
    <location>
        <begin position="521"/>
        <end position="525"/>
    </location>
    <ligand>
        <name>ATP</name>
        <dbReference type="ChEBI" id="CHEBI:30616"/>
        <label>2</label>
    </ligand>
</feature>
<feature type="binding site" evidence="1">
    <location>
        <position position="563"/>
    </location>
    <ligand>
        <name>ATP</name>
        <dbReference type="ChEBI" id="CHEBI:30616"/>
        <label>2</label>
    </ligand>
</feature>
<feature type="modified residue" description="N-acetylmethionine" evidence="1">
    <location>
        <position position="1"/>
    </location>
</feature>
<feature type="modified residue" description="N6-acetyllysine" evidence="7">
    <location>
        <position position="12"/>
    </location>
</feature>
<organism>
    <name type="scientific">Mus musculus</name>
    <name type="common">Mouse</name>
    <dbReference type="NCBI Taxonomy" id="10090"/>
    <lineage>
        <taxon>Eukaryota</taxon>
        <taxon>Metazoa</taxon>
        <taxon>Chordata</taxon>
        <taxon>Craniata</taxon>
        <taxon>Vertebrata</taxon>
        <taxon>Euteleostomi</taxon>
        <taxon>Mammalia</taxon>
        <taxon>Eutheria</taxon>
        <taxon>Euarchontoglires</taxon>
        <taxon>Glires</taxon>
        <taxon>Rodentia</taxon>
        <taxon>Myomorpha</taxon>
        <taxon>Muroidea</taxon>
        <taxon>Muridae</taxon>
        <taxon>Murinae</taxon>
        <taxon>Mus</taxon>
        <taxon>Mus</taxon>
    </lineage>
</organism>
<reference key="1">
    <citation type="journal article" date="1995" name="J. Biol. Chem.">
        <title>The isolation and characterization of cDNA encoding the mouse bifunctional ATP sulfurylase-adenosine 5'-phosphosulfate kinase.</title>
        <authorList>
            <person name="Li H."/>
            <person name="Deyrup A."/>
            <person name="Mensch J.R. Jr."/>
            <person name="Domowicz M."/>
            <person name="Konstantinidis A.K."/>
            <person name="Schwartz N.B."/>
        </authorList>
    </citation>
    <scope>NUCLEOTIDE SEQUENCE [MRNA]</scope>
    <scope>FUNCTION</scope>
    <scope>CATALYTIC ACTIVITY</scope>
    <scope>PATHWAY</scope>
    <scope>TISSUE SPECIFICITY</scope>
    <source>
        <tissue>Brain</tissue>
    </source>
</reference>
<reference key="2">
    <citation type="journal article" date="2005" name="Science">
        <title>The transcriptional landscape of the mammalian genome.</title>
        <authorList>
            <person name="Carninci P."/>
            <person name="Kasukawa T."/>
            <person name="Katayama S."/>
            <person name="Gough J."/>
            <person name="Frith M.C."/>
            <person name="Maeda N."/>
            <person name="Oyama R."/>
            <person name="Ravasi T."/>
            <person name="Lenhard B."/>
            <person name="Wells C."/>
            <person name="Kodzius R."/>
            <person name="Shimokawa K."/>
            <person name="Bajic V.B."/>
            <person name="Brenner S.E."/>
            <person name="Batalov S."/>
            <person name="Forrest A.R."/>
            <person name="Zavolan M."/>
            <person name="Davis M.J."/>
            <person name="Wilming L.G."/>
            <person name="Aidinis V."/>
            <person name="Allen J.E."/>
            <person name="Ambesi-Impiombato A."/>
            <person name="Apweiler R."/>
            <person name="Aturaliya R.N."/>
            <person name="Bailey T.L."/>
            <person name="Bansal M."/>
            <person name="Baxter L."/>
            <person name="Beisel K.W."/>
            <person name="Bersano T."/>
            <person name="Bono H."/>
            <person name="Chalk A.M."/>
            <person name="Chiu K.P."/>
            <person name="Choudhary V."/>
            <person name="Christoffels A."/>
            <person name="Clutterbuck D.R."/>
            <person name="Crowe M.L."/>
            <person name="Dalla E."/>
            <person name="Dalrymple B.P."/>
            <person name="de Bono B."/>
            <person name="Della Gatta G."/>
            <person name="di Bernardo D."/>
            <person name="Down T."/>
            <person name="Engstrom P."/>
            <person name="Fagiolini M."/>
            <person name="Faulkner G."/>
            <person name="Fletcher C.F."/>
            <person name="Fukushima T."/>
            <person name="Furuno M."/>
            <person name="Futaki S."/>
            <person name="Gariboldi M."/>
            <person name="Georgii-Hemming P."/>
            <person name="Gingeras T.R."/>
            <person name="Gojobori T."/>
            <person name="Green R.E."/>
            <person name="Gustincich S."/>
            <person name="Harbers M."/>
            <person name="Hayashi Y."/>
            <person name="Hensch T.K."/>
            <person name="Hirokawa N."/>
            <person name="Hill D."/>
            <person name="Huminiecki L."/>
            <person name="Iacono M."/>
            <person name="Ikeo K."/>
            <person name="Iwama A."/>
            <person name="Ishikawa T."/>
            <person name="Jakt M."/>
            <person name="Kanapin A."/>
            <person name="Katoh M."/>
            <person name="Kawasawa Y."/>
            <person name="Kelso J."/>
            <person name="Kitamura H."/>
            <person name="Kitano H."/>
            <person name="Kollias G."/>
            <person name="Krishnan S.P."/>
            <person name="Kruger A."/>
            <person name="Kummerfeld S.K."/>
            <person name="Kurochkin I.V."/>
            <person name="Lareau L.F."/>
            <person name="Lazarevic D."/>
            <person name="Lipovich L."/>
            <person name="Liu J."/>
            <person name="Liuni S."/>
            <person name="McWilliam S."/>
            <person name="Madan Babu M."/>
            <person name="Madera M."/>
            <person name="Marchionni L."/>
            <person name="Matsuda H."/>
            <person name="Matsuzawa S."/>
            <person name="Miki H."/>
            <person name="Mignone F."/>
            <person name="Miyake S."/>
            <person name="Morris K."/>
            <person name="Mottagui-Tabar S."/>
            <person name="Mulder N."/>
            <person name="Nakano N."/>
            <person name="Nakauchi H."/>
            <person name="Ng P."/>
            <person name="Nilsson R."/>
            <person name="Nishiguchi S."/>
            <person name="Nishikawa S."/>
            <person name="Nori F."/>
            <person name="Ohara O."/>
            <person name="Okazaki Y."/>
            <person name="Orlando V."/>
            <person name="Pang K.C."/>
            <person name="Pavan W.J."/>
            <person name="Pavesi G."/>
            <person name="Pesole G."/>
            <person name="Petrovsky N."/>
            <person name="Piazza S."/>
            <person name="Reed J."/>
            <person name="Reid J.F."/>
            <person name="Ring B.Z."/>
            <person name="Ringwald M."/>
            <person name="Rost B."/>
            <person name="Ruan Y."/>
            <person name="Salzberg S.L."/>
            <person name="Sandelin A."/>
            <person name="Schneider C."/>
            <person name="Schoenbach C."/>
            <person name="Sekiguchi K."/>
            <person name="Semple C.A."/>
            <person name="Seno S."/>
            <person name="Sessa L."/>
            <person name="Sheng Y."/>
            <person name="Shibata Y."/>
            <person name="Shimada H."/>
            <person name="Shimada K."/>
            <person name="Silva D."/>
            <person name="Sinclair B."/>
            <person name="Sperling S."/>
            <person name="Stupka E."/>
            <person name="Sugiura K."/>
            <person name="Sultana R."/>
            <person name="Takenaka Y."/>
            <person name="Taki K."/>
            <person name="Tammoja K."/>
            <person name="Tan S.L."/>
            <person name="Tang S."/>
            <person name="Taylor M.S."/>
            <person name="Tegner J."/>
            <person name="Teichmann S.A."/>
            <person name="Ueda H.R."/>
            <person name="van Nimwegen E."/>
            <person name="Verardo R."/>
            <person name="Wei C.L."/>
            <person name="Yagi K."/>
            <person name="Yamanishi H."/>
            <person name="Zabarovsky E."/>
            <person name="Zhu S."/>
            <person name="Zimmer A."/>
            <person name="Hide W."/>
            <person name="Bult C."/>
            <person name="Grimmond S.M."/>
            <person name="Teasdale R.D."/>
            <person name="Liu E.T."/>
            <person name="Brusic V."/>
            <person name="Quackenbush J."/>
            <person name="Wahlestedt C."/>
            <person name="Mattick J.S."/>
            <person name="Hume D.A."/>
            <person name="Kai C."/>
            <person name="Sasaki D."/>
            <person name="Tomaru Y."/>
            <person name="Fukuda S."/>
            <person name="Kanamori-Katayama M."/>
            <person name="Suzuki M."/>
            <person name="Aoki J."/>
            <person name="Arakawa T."/>
            <person name="Iida J."/>
            <person name="Imamura K."/>
            <person name="Itoh M."/>
            <person name="Kato T."/>
            <person name="Kawaji H."/>
            <person name="Kawagashira N."/>
            <person name="Kawashima T."/>
            <person name="Kojima M."/>
            <person name="Kondo S."/>
            <person name="Konno H."/>
            <person name="Nakano K."/>
            <person name="Ninomiya N."/>
            <person name="Nishio T."/>
            <person name="Okada M."/>
            <person name="Plessy C."/>
            <person name="Shibata K."/>
            <person name="Shiraki T."/>
            <person name="Suzuki S."/>
            <person name="Tagami M."/>
            <person name="Waki K."/>
            <person name="Watahiki A."/>
            <person name="Okamura-Oho Y."/>
            <person name="Suzuki H."/>
            <person name="Kawai J."/>
            <person name="Hayashizaki Y."/>
        </authorList>
    </citation>
    <scope>NUCLEOTIDE SEQUENCE [LARGE SCALE MRNA]</scope>
    <source>
        <strain evidence="5">C57BL/6J</strain>
        <tissue evidence="5">Bone marrow</tissue>
        <tissue evidence="4">Heart</tissue>
        <tissue evidence="6">Kidney</tissue>
    </source>
</reference>
<reference key="3">
    <citation type="submission" date="2005-09" db="EMBL/GenBank/DDBJ databases">
        <authorList>
            <person name="Mural R.J."/>
            <person name="Adams M.D."/>
            <person name="Myers E.W."/>
            <person name="Smith H.O."/>
            <person name="Venter J.C."/>
        </authorList>
    </citation>
    <scope>NUCLEOTIDE SEQUENCE [LARGE SCALE GENOMIC DNA]</scope>
</reference>
<reference key="4">
    <citation type="journal article" date="2010" name="Cell">
        <title>A tissue-specific atlas of mouse protein phosphorylation and expression.</title>
        <authorList>
            <person name="Huttlin E.L."/>
            <person name="Jedrychowski M.P."/>
            <person name="Elias J.E."/>
            <person name="Goswami T."/>
            <person name="Rad R."/>
            <person name="Beausoleil S.A."/>
            <person name="Villen J."/>
            <person name="Haas W."/>
            <person name="Sowa M.E."/>
            <person name="Gygi S.P."/>
        </authorList>
    </citation>
    <scope>IDENTIFICATION BY MASS SPECTROMETRY [LARGE SCALE ANALYSIS]</scope>
    <source>
        <tissue>Brain</tissue>
        <tissue>Heart</tissue>
        <tissue>Kidney</tissue>
        <tissue>Liver</tissue>
        <tissue>Lung</tissue>
        <tissue>Pancreas</tissue>
        <tissue>Spleen</tissue>
        <tissue>Testis</tissue>
    </source>
</reference>
<reference key="5">
    <citation type="journal article" date="2013" name="Mol. Cell">
        <title>SIRT5-mediated lysine desuccinylation impacts diverse metabolic pathways.</title>
        <authorList>
            <person name="Park J."/>
            <person name="Chen Y."/>
            <person name="Tishkoff D.X."/>
            <person name="Peng C."/>
            <person name="Tan M."/>
            <person name="Dai L."/>
            <person name="Xie Z."/>
            <person name="Zhang Y."/>
            <person name="Zwaans B.M."/>
            <person name="Skinner M.E."/>
            <person name="Lombard D.B."/>
            <person name="Zhao Y."/>
        </authorList>
    </citation>
    <scope>ACETYLATION [LARGE SCALE ANALYSIS] AT LYS-12</scope>
    <scope>IDENTIFICATION BY MASS SPECTROMETRY [LARGE SCALE ANALYSIS]</scope>
    <source>
        <tissue>Embryonic fibroblast</tissue>
    </source>
</reference>
<accession>Q60967</accession>
<accession>Q3U647</accession>
<keyword id="KW-0007">Acetylation</keyword>
<keyword id="KW-0067">ATP-binding</keyword>
<keyword id="KW-0418">Kinase</keyword>
<keyword id="KW-0511">Multifunctional enzyme</keyword>
<keyword id="KW-0547">Nucleotide-binding</keyword>
<keyword id="KW-0548">Nucleotidyltransferase</keyword>
<keyword id="KW-1185">Reference proteome</keyword>
<keyword id="KW-0808">Transferase</keyword>
<protein>
    <recommendedName>
        <fullName>Bifunctional 3'-phosphoadenosine 5'-phosphosulfate synthase 1</fullName>
        <shortName>PAPS synthase 1</shortName>
        <shortName>PAPSS 1</shortName>
    </recommendedName>
    <alternativeName>
        <fullName>Sulfurylase kinase 1</fullName>
        <shortName>SK 1</shortName>
        <shortName>SK1</shortName>
    </alternativeName>
    <domain>
        <recommendedName>
            <fullName>Sulfate adenylyltransferase</fullName>
            <ecNumber evidence="2">2.7.7.4</ecNumber>
        </recommendedName>
        <alternativeName>
            <fullName>ATP-sulfurylase</fullName>
        </alternativeName>
        <alternativeName>
            <fullName>Sulfate adenylate transferase</fullName>
            <shortName>SAT</shortName>
        </alternativeName>
    </domain>
    <domain>
        <recommendedName>
            <fullName>Adenylyl-sulfate kinase</fullName>
            <ecNumber evidence="2">2.7.1.25</ecNumber>
        </recommendedName>
        <alternativeName>
            <fullName>3'-phosphoadenosine-5'-phosphosulfate synthase</fullName>
        </alternativeName>
        <alternativeName>
            <fullName>APS kinase</fullName>
        </alternativeName>
        <alternativeName>
            <fullName>Adenosine-5'-phosphosulfate 3'-phosphotransferase</fullName>
        </alternativeName>
        <alternativeName>
            <fullName>Adenylylsulfate 3'-phosphotransferase</fullName>
        </alternativeName>
    </domain>
</protein>